<proteinExistence type="inferred from homology"/>
<dbReference type="EMBL" id="CP000087">
    <property type="protein sequence ID" value="ABE05136.1"/>
    <property type="molecule type" value="Genomic_DNA"/>
</dbReference>
<dbReference type="RefSeq" id="WP_011477714.1">
    <property type="nucleotide sequence ID" value="NC_007940.1"/>
</dbReference>
<dbReference type="SMR" id="Q1RHM8"/>
<dbReference type="KEGG" id="rbe:RBE_1055"/>
<dbReference type="eggNOG" id="COG0197">
    <property type="taxonomic scope" value="Bacteria"/>
</dbReference>
<dbReference type="HOGENOM" id="CLU_078858_2_1_5"/>
<dbReference type="OrthoDB" id="9802589at2"/>
<dbReference type="Proteomes" id="UP000001951">
    <property type="component" value="Chromosome"/>
</dbReference>
<dbReference type="GO" id="GO:0022625">
    <property type="term" value="C:cytosolic large ribosomal subunit"/>
    <property type="evidence" value="ECO:0007669"/>
    <property type="project" value="TreeGrafter"/>
</dbReference>
<dbReference type="GO" id="GO:0019843">
    <property type="term" value="F:rRNA binding"/>
    <property type="evidence" value="ECO:0007669"/>
    <property type="project" value="UniProtKB-UniRule"/>
</dbReference>
<dbReference type="GO" id="GO:0003735">
    <property type="term" value="F:structural constituent of ribosome"/>
    <property type="evidence" value="ECO:0007669"/>
    <property type="project" value="InterPro"/>
</dbReference>
<dbReference type="GO" id="GO:0000049">
    <property type="term" value="F:tRNA binding"/>
    <property type="evidence" value="ECO:0007669"/>
    <property type="project" value="UniProtKB-KW"/>
</dbReference>
<dbReference type="GO" id="GO:0006412">
    <property type="term" value="P:translation"/>
    <property type="evidence" value="ECO:0007669"/>
    <property type="project" value="UniProtKB-UniRule"/>
</dbReference>
<dbReference type="CDD" id="cd01433">
    <property type="entry name" value="Ribosomal_L16_L10e"/>
    <property type="match status" value="1"/>
</dbReference>
<dbReference type="FunFam" id="3.90.1170.10:FF:000001">
    <property type="entry name" value="50S ribosomal protein L16"/>
    <property type="match status" value="1"/>
</dbReference>
<dbReference type="Gene3D" id="3.90.1170.10">
    <property type="entry name" value="Ribosomal protein L10e/L16"/>
    <property type="match status" value="1"/>
</dbReference>
<dbReference type="HAMAP" id="MF_01342">
    <property type="entry name" value="Ribosomal_uL16"/>
    <property type="match status" value="1"/>
</dbReference>
<dbReference type="InterPro" id="IPR047873">
    <property type="entry name" value="Ribosomal_uL16"/>
</dbReference>
<dbReference type="InterPro" id="IPR000114">
    <property type="entry name" value="Ribosomal_uL16_bact-type"/>
</dbReference>
<dbReference type="InterPro" id="IPR020798">
    <property type="entry name" value="Ribosomal_uL16_CS"/>
</dbReference>
<dbReference type="InterPro" id="IPR016180">
    <property type="entry name" value="Ribosomal_uL16_dom"/>
</dbReference>
<dbReference type="InterPro" id="IPR036920">
    <property type="entry name" value="Ribosomal_uL16_sf"/>
</dbReference>
<dbReference type="NCBIfam" id="TIGR01164">
    <property type="entry name" value="rplP_bact"/>
    <property type="match status" value="1"/>
</dbReference>
<dbReference type="PANTHER" id="PTHR12220">
    <property type="entry name" value="50S/60S RIBOSOMAL PROTEIN L16"/>
    <property type="match status" value="1"/>
</dbReference>
<dbReference type="PANTHER" id="PTHR12220:SF13">
    <property type="entry name" value="LARGE RIBOSOMAL SUBUNIT PROTEIN UL16M"/>
    <property type="match status" value="1"/>
</dbReference>
<dbReference type="Pfam" id="PF00252">
    <property type="entry name" value="Ribosomal_L16"/>
    <property type="match status" value="1"/>
</dbReference>
<dbReference type="PRINTS" id="PR00060">
    <property type="entry name" value="RIBOSOMALL16"/>
</dbReference>
<dbReference type="SUPFAM" id="SSF54686">
    <property type="entry name" value="Ribosomal protein L16p/L10e"/>
    <property type="match status" value="1"/>
</dbReference>
<dbReference type="PROSITE" id="PS00586">
    <property type="entry name" value="RIBOSOMAL_L16_1"/>
    <property type="match status" value="1"/>
</dbReference>
<dbReference type="PROSITE" id="PS00701">
    <property type="entry name" value="RIBOSOMAL_L16_2"/>
    <property type="match status" value="1"/>
</dbReference>
<organism>
    <name type="scientific">Rickettsia bellii (strain RML369-C)</name>
    <dbReference type="NCBI Taxonomy" id="336407"/>
    <lineage>
        <taxon>Bacteria</taxon>
        <taxon>Pseudomonadati</taxon>
        <taxon>Pseudomonadota</taxon>
        <taxon>Alphaproteobacteria</taxon>
        <taxon>Rickettsiales</taxon>
        <taxon>Rickettsiaceae</taxon>
        <taxon>Rickettsieae</taxon>
        <taxon>Rickettsia</taxon>
        <taxon>belli group</taxon>
    </lineage>
</organism>
<sequence length="136" mass="15247">MLAPKKQKFRKAHKGRVVSKSKAGTTLAFGSFGLKSIDGWRVTARQIEAGRKAATRCMKRQGRLWIRIFPDLPVSKKPAEVRMGKGKGNPEFFAVRVSPGRIMFEIEGVEEDVAVKALELASAKLPVRTRIVRHYE</sequence>
<protein>
    <recommendedName>
        <fullName evidence="1">Large ribosomal subunit protein uL16</fullName>
    </recommendedName>
    <alternativeName>
        <fullName evidence="2">50S ribosomal protein L16</fullName>
    </alternativeName>
</protein>
<keyword id="KW-0687">Ribonucleoprotein</keyword>
<keyword id="KW-0689">Ribosomal protein</keyword>
<keyword id="KW-0694">RNA-binding</keyword>
<keyword id="KW-0699">rRNA-binding</keyword>
<keyword id="KW-0820">tRNA-binding</keyword>
<reference key="1">
    <citation type="journal article" date="2006" name="PLoS Genet.">
        <title>Genome sequence of Rickettsia bellii illuminates the role of amoebae in gene exchanges between intracellular pathogens.</title>
        <authorList>
            <person name="Ogata H."/>
            <person name="La Scola B."/>
            <person name="Audic S."/>
            <person name="Renesto P."/>
            <person name="Blanc G."/>
            <person name="Robert C."/>
            <person name="Fournier P.-E."/>
            <person name="Claverie J.-M."/>
            <person name="Raoult D."/>
        </authorList>
    </citation>
    <scope>NUCLEOTIDE SEQUENCE [LARGE SCALE GENOMIC DNA]</scope>
    <source>
        <strain>RML369-C</strain>
    </source>
</reference>
<accession>Q1RHM8</accession>
<gene>
    <name evidence="1" type="primary">rplP</name>
    <name type="ordered locus">RBE_1055</name>
</gene>
<comment type="function">
    <text evidence="1">Binds 23S rRNA and is also seen to make contacts with the A and possibly P site tRNAs.</text>
</comment>
<comment type="subunit">
    <text evidence="1">Part of the 50S ribosomal subunit.</text>
</comment>
<comment type="similarity">
    <text evidence="1">Belongs to the universal ribosomal protein uL16 family.</text>
</comment>
<feature type="chain" id="PRO_0000251666" description="Large ribosomal subunit protein uL16">
    <location>
        <begin position="1"/>
        <end position="136"/>
    </location>
</feature>
<evidence type="ECO:0000255" key="1">
    <source>
        <dbReference type="HAMAP-Rule" id="MF_01342"/>
    </source>
</evidence>
<evidence type="ECO:0000305" key="2"/>
<name>RL16_RICBR</name>